<dbReference type="EMBL" id="GQ414737">
    <property type="protein sequence ID" value="ACV07667.1"/>
    <property type="molecule type" value="mRNA"/>
</dbReference>
<dbReference type="SMR" id="C8CK74"/>
<dbReference type="ConoServer" id="3870">
    <property type="toxin name" value="Mi15a precursor"/>
</dbReference>
<dbReference type="GO" id="GO:0005576">
    <property type="term" value="C:extracellular region"/>
    <property type="evidence" value="ECO:0007669"/>
    <property type="project" value="UniProtKB-SubCell"/>
</dbReference>
<dbReference type="GO" id="GO:0008200">
    <property type="term" value="F:ion channel inhibitor activity"/>
    <property type="evidence" value="ECO:0007669"/>
    <property type="project" value="InterPro"/>
</dbReference>
<dbReference type="GO" id="GO:0090729">
    <property type="term" value="F:toxin activity"/>
    <property type="evidence" value="ECO:0007669"/>
    <property type="project" value="UniProtKB-KW"/>
</dbReference>
<dbReference type="InterPro" id="IPR004214">
    <property type="entry name" value="Conotoxin"/>
</dbReference>
<dbReference type="Pfam" id="PF02950">
    <property type="entry name" value="Conotoxin"/>
    <property type="match status" value="1"/>
</dbReference>
<evidence type="ECO:0000250" key="1"/>
<evidence type="ECO:0000255" key="2"/>
<evidence type="ECO:0000305" key="3"/>
<evidence type="ECO:0000305" key="4">
    <source ref="1"/>
</evidence>
<evidence type="ECO:0000312" key="5">
    <source>
        <dbReference type="EMBL" id="ACV07667.1"/>
    </source>
</evidence>
<proteinExistence type="inferred from homology"/>
<keyword id="KW-1015">Disulfide bond</keyword>
<keyword id="KW-0873">Pyrrolidone carboxylic acid</keyword>
<keyword id="KW-0964">Secreted</keyword>
<keyword id="KW-0732">Signal</keyword>
<keyword id="KW-0800">Toxin</keyword>
<protein>
    <recommendedName>
        <fullName evidence="3">Conotoxin Mi15a</fullName>
    </recommendedName>
    <alternativeName>
        <fullName evidence="5">Conotoxin Ml15a</fullName>
    </alternativeName>
</protein>
<name>CO2FA_CONMI</name>
<reference key="1">
    <citation type="submission" date="2009-07" db="EMBL/GenBank/DDBJ databases">
        <title>A novel class of conotoxin cDNAs with a distinctive cysteine arrangement.</title>
        <authorList>
            <person name="Wang L."/>
            <person name="Jiang X."/>
            <person name="Wu Y."/>
            <person name="Zhou M."/>
            <person name="Xu A."/>
        </authorList>
    </citation>
    <scope>NUCLEOTIDE SEQUENCE [MRNA]</scope>
    <source>
        <tissue>Venom duct</tissue>
    </source>
</reference>
<accession>C8CK74</accession>
<feature type="signal peptide" evidence="2">
    <location>
        <begin position="1"/>
        <end position="23"/>
    </location>
</feature>
<feature type="propeptide" id="PRO_0000392190" evidence="1">
    <location>
        <begin position="24"/>
        <end position="49"/>
    </location>
</feature>
<feature type="peptide" id="PRO_0000392191" description="Conotoxin Mi15a">
    <location>
        <begin position="50"/>
        <end position="85"/>
    </location>
</feature>
<feature type="modified residue" description="Pyrrolidone carboxylic acid" evidence="1">
    <location>
        <position position="50"/>
    </location>
</feature>
<organism>
    <name type="scientific">Conus miles</name>
    <name type="common">Soldier cone</name>
    <name type="synonym">Mile cone</name>
    <dbReference type="NCBI Taxonomy" id="69564"/>
    <lineage>
        <taxon>Eukaryota</taxon>
        <taxon>Metazoa</taxon>
        <taxon>Spiralia</taxon>
        <taxon>Lophotrochozoa</taxon>
        <taxon>Mollusca</taxon>
        <taxon>Gastropoda</taxon>
        <taxon>Caenogastropoda</taxon>
        <taxon>Neogastropoda</taxon>
        <taxon>Conoidea</taxon>
        <taxon>Conidae</taxon>
        <taxon>Conus</taxon>
        <taxon>Rhizoconus</taxon>
    </lineage>
</organism>
<sequence length="85" mass="9546">MEKLTVLILVATVLLTIQVLGQSDRDKHLKRRPKQYATKRLSARMRGHRQCTGAGYECEETPECCPNLTCKCSGSPLCTRYSCQA</sequence>
<comment type="subcellular location">
    <subcellularLocation>
        <location evidence="4">Secreted</location>
    </subcellularLocation>
</comment>
<comment type="tissue specificity">
    <text evidence="4">Expressed by the venom duct.</text>
</comment>
<comment type="domain">
    <text evidence="3">The cysteine framework is XV (C-C-CC-C-C-C-C).</text>
</comment>
<comment type="PTM">
    <text evidence="3">Contains 4 disulfide bonds.</text>
</comment>
<comment type="similarity">
    <text evidence="3">Belongs to the conotoxin O2 superfamily.</text>
</comment>